<organism>
    <name type="scientific">Leptospira borgpetersenii serovar Hardjo-bovis (strain JB197)</name>
    <dbReference type="NCBI Taxonomy" id="355277"/>
    <lineage>
        <taxon>Bacteria</taxon>
        <taxon>Pseudomonadati</taxon>
        <taxon>Spirochaetota</taxon>
        <taxon>Spirochaetia</taxon>
        <taxon>Leptospirales</taxon>
        <taxon>Leptospiraceae</taxon>
        <taxon>Leptospira</taxon>
    </lineage>
</organism>
<gene>
    <name evidence="1" type="primary">infA</name>
    <name type="ordered locus">LBJ_2637</name>
</gene>
<sequence>MAKEEAITVDGTVLEPLPNAMFRVELENGHKVLAHISGKMRMHYIRILPGDKVTVELSPYDLSKGRITYRKK</sequence>
<proteinExistence type="inferred from homology"/>
<reference key="1">
    <citation type="journal article" date="2006" name="Proc. Natl. Acad. Sci. U.S.A.">
        <title>Genome reduction in Leptospira borgpetersenii reflects limited transmission potential.</title>
        <authorList>
            <person name="Bulach D.M."/>
            <person name="Zuerner R.L."/>
            <person name="Wilson P."/>
            <person name="Seemann T."/>
            <person name="McGrath A."/>
            <person name="Cullen P.A."/>
            <person name="Davis J."/>
            <person name="Johnson M."/>
            <person name="Kuczek E."/>
            <person name="Alt D.P."/>
            <person name="Peterson-Burch B."/>
            <person name="Coppel R.L."/>
            <person name="Rood J.I."/>
            <person name="Davies J.K."/>
            <person name="Adler B."/>
        </authorList>
    </citation>
    <scope>NUCLEOTIDE SEQUENCE [LARGE SCALE GENOMIC DNA]</scope>
    <source>
        <strain>JB197</strain>
    </source>
</reference>
<evidence type="ECO:0000255" key="1">
    <source>
        <dbReference type="HAMAP-Rule" id="MF_00075"/>
    </source>
</evidence>
<protein>
    <recommendedName>
        <fullName evidence="1">Translation initiation factor IF-1</fullName>
    </recommendedName>
</protein>
<name>IF1_LEPBJ</name>
<comment type="function">
    <text evidence="1">One of the essential components for the initiation of protein synthesis. Stabilizes the binding of IF-2 and IF-3 on the 30S subunit to which N-formylmethionyl-tRNA(fMet) subsequently binds. Helps modulate mRNA selection, yielding the 30S pre-initiation complex (PIC). Upon addition of the 50S ribosomal subunit IF-1, IF-2 and IF-3 are released leaving the mature 70S translation initiation complex.</text>
</comment>
<comment type="subunit">
    <text evidence="1">Component of the 30S ribosomal translation pre-initiation complex which assembles on the 30S ribosome in the order IF-2 and IF-3, IF-1 and N-formylmethionyl-tRNA(fMet); mRNA recruitment can occur at any time during PIC assembly.</text>
</comment>
<comment type="subcellular location">
    <subcellularLocation>
        <location evidence="1">Cytoplasm</location>
    </subcellularLocation>
</comment>
<comment type="similarity">
    <text evidence="1">Belongs to the IF-1 family.</text>
</comment>
<accession>Q04PW0</accession>
<dbReference type="EMBL" id="CP000350">
    <property type="protein sequence ID" value="ABJ77060.1"/>
    <property type="molecule type" value="Genomic_DNA"/>
</dbReference>
<dbReference type="RefSeq" id="WP_001040194.1">
    <property type="nucleotide sequence ID" value="NC_008510.1"/>
</dbReference>
<dbReference type="SMR" id="Q04PW0"/>
<dbReference type="GeneID" id="34315486"/>
<dbReference type="KEGG" id="lbj:LBJ_2637"/>
<dbReference type="HOGENOM" id="CLU_151267_1_0_12"/>
<dbReference type="Proteomes" id="UP000000656">
    <property type="component" value="Chromosome 1"/>
</dbReference>
<dbReference type="GO" id="GO:0005829">
    <property type="term" value="C:cytosol"/>
    <property type="evidence" value="ECO:0007669"/>
    <property type="project" value="TreeGrafter"/>
</dbReference>
<dbReference type="GO" id="GO:0043022">
    <property type="term" value="F:ribosome binding"/>
    <property type="evidence" value="ECO:0007669"/>
    <property type="project" value="UniProtKB-UniRule"/>
</dbReference>
<dbReference type="GO" id="GO:0019843">
    <property type="term" value="F:rRNA binding"/>
    <property type="evidence" value="ECO:0007669"/>
    <property type="project" value="UniProtKB-UniRule"/>
</dbReference>
<dbReference type="GO" id="GO:0003743">
    <property type="term" value="F:translation initiation factor activity"/>
    <property type="evidence" value="ECO:0007669"/>
    <property type="project" value="UniProtKB-UniRule"/>
</dbReference>
<dbReference type="CDD" id="cd04451">
    <property type="entry name" value="S1_IF1"/>
    <property type="match status" value="1"/>
</dbReference>
<dbReference type="FunFam" id="2.40.50.140:FF:000002">
    <property type="entry name" value="Translation initiation factor IF-1"/>
    <property type="match status" value="1"/>
</dbReference>
<dbReference type="Gene3D" id="2.40.50.140">
    <property type="entry name" value="Nucleic acid-binding proteins"/>
    <property type="match status" value="1"/>
</dbReference>
<dbReference type="HAMAP" id="MF_00075">
    <property type="entry name" value="IF_1"/>
    <property type="match status" value="1"/>
</dbReference>
<dbReference type="InterPro" id="IPR012340">
    <property type="entry name" value="NA-bd_OB-fold"/>
</dbReference>
<dbReference type="InterPro" id="IPR006196">
    <property type="entry name" value="RNA-binding_domain_S1_IF1"/>
</dbReference>
<dbReference type="InterPro" id="IPR003029">
    <property type="entry name" value="S1_domain"/>
</dbReference>
<dbReference type="InterPro" id="IPR004368">
    <property type="entry name" value="TIF_IF1"/>
</dbReference>
<dbReference type="NCBIfam" id="TIGR00008">
    <property type="entry name" value="infA"/>
    <property type="match status" value="1"/>
</dbReference>
<dbReference type="PANTHER" id="PTHR33370">
    <property type="entry name" value="TRANSLATION INITIATION FACTOR IF-1, CHLOROPLASTIC"/>
    <property type="match status" value="1"/>
</dbReference>
<dbReference type="PANTHER" id="PTHR33370:SF1">
    <property type="entry name" value="TRANSLATION INITIATION FACTOR IF-1, CHLOROPLASTIC"/>
    <property type="match status" value="1"/>
</dbReference>
<dbReference type="Pfam" id="PF01176">
    <property type="entry name" value="eIF-1a"/>
    <property type="match status" value="1"/>
</dbReference>
<dbReference type="SMART" id="SM00316">
    <property type="entry name" value="S1"/>
    <property type="match status" value="1"/>
</dbReference>
<dbReference type="SUPFAM" id="SSF50249">
    <property type="entry name" value="Nucleic acid-binding proteins"/>
    <property type="match status" value="1"/>
</dbReference>
<dbReference type="PROSITE" id="PS50832">
    <property type="entry name" value="S1_IF1_TYPE"/>
    <property type="match status" value="1"/>
</dbReference>
<keyword id="KW-0963">Cytoplasm</keyword>
<keyword id="KW-0396">Initiation factor</keyword>
<keyword id="KW-0648">Protein biosynthesis</keyword>
<keyword id="KW-0694">RNA-binding</keyword>
<keyword id="KW-0699">rRNA-binding</keyword>
<feature type="chain" id="PRO_0000338852" description="Translation initiation factor IF-1">
    <location>
        <begin position="1"/>
        <end position="72"/>
    </location>
</feature>
<feature type="domain" description="S1-like" evidence="1">
    <location>
        <begin position="1"/>
        <end position="72"/>
    </location>
</feature>